<sequence length="879" mass="101629">MTDLAPKYNPNEVEKGRYQEWLDEDLFKPSGDKKAHPYSIVIPPPNVTGKLHLGHAWDTAIQDTLIRFKRMEGYDTLYLPGMDHAGIATQAKVEAKLRKQGKDRHEMGREAFVKQVWDWKDEYANIIKSQWSKLGLSLDYSRERFTLDKGLSKAVKKVFVQLYNEGLIYRGEYIINWDPTLETALSDIEVIHKDDKGAFYHVKYPFADGSGFVEIATTRPETMFGDTAVAVAPGDPRYKDIVGKELILPLVGRHIPIIEDQHVDPEFGTGLVKITPAHDPNDFQVGNRHNLKRINVMNDDGTMNEEAGKYAGMDRFECREALVKDLKEEGYLIKVEPIVHSVGHSERSGVQVEPRLSKQWFVKMKPLADKVLENQKSEGKVNFVPERFEQTLNHWMENVHDWVISRQLWWGHRIPAWYNKKTGETYVGEEAPKDIENWEQDPDVLDTWFSSALWPFSTMGWPDTDNPDFKRYFPTNALVTGYDIIFFWVSRMIFQSLHFTKERPFKDVVLHGLIRDEQGRKMSKSLGNGIDPMDVIDKYGADALRWFLLNGTAPGQDTRFSYTKMDAAWNFINKIWNVSRFVIMNLPEDAKPAHMPDTSKFDLSDKWIFDRLNHTIGEVTRLFGEYQFGEAGREAYNFIWNDFCDWYIEISKVALNGDDEELKARKQENLIWILDQILRLMHPIMPFVTEKLWLSMPHEGKSIMTASYPVTHKEFENKTADQEMDFLIEVIKAVRNIRMEVNAPMSSEIDIMIKLDDLNNKHILDENVDYVENFLHPKKLEVSADIEAPKLAKTAVIPGAQIFVPLTELVNVDEELAKMEKEAKRLEDEVARCEKKLSNKGFVDHAPEAVVNKEKEKMADYESQLSGVRERIQDLKESK</sequence>
<protein>
    <recommendedName>
        <fullName evidence="1">Valine--tRNA ligase</fullName>
        <ecNumber evidence="1">6.1.1.9</ecNumber>
    </recommendedName>
    <alternativeName>
        <fullName evidence="1">Valyl-tRNA synthetase</fullName>
        <shortName evidence="1">ValRS</shortName>
    </alternativeName>
</protein>
<proteinExistence type="inferred from homology"/>
<reference key="1">
    <citation type="journal article" date="2005" name="Proc. Natl. Acad. Sci. U.S.A.">
        <title>Complete genome sequence of the probiotic lactic acid bacterium Lactobacillus acidophilus NCFM.</title>
        <authorList>
            <person name="Altermann E."/>
            <person name="Russell W.M."/>
            <person name="Azcarate-Peril M.A."/>
            <person name="Barrangou R."/>
            <person name="Buck B.L."/>
            <person name="McAuliffe O."/>
            <person name="Souther N."/>
            <person name="Dobson A."/>
            <person name="Duong T."/>
            <person name="Callanan M."/>
            <person name="Lick S."/>
            <person name="Hamrick A."/>
            <person name="Cano R."/>
            <person name="Klaenhammer T.R."/>
        </authorList>
    </citation>
    <scope>NUCLEOTIDE SEQUENCE [LARGE SCALE GENOMIC DNA]</scope>
    <source>
        <strain>ATCC 700396 / NCK56 / N2 / NCFM</strain>
    </source>
</reference>
<name>SYV_LACAC</name>
<dbReference type="EC" id="6.1.1.9" evidence="1"/>
<dbReference type="EMBL" id="CP000033">
    <property type="protein sequence ID" value="AAV42659.1"/>
    <property type="molecule type" value="Genomic_DNA"/>
</dbReference>
<dbReference type="RefSeq" id="WP_011254252.1">
    <property type="nucleotide sequence ID" value="NC_006814.3"/>
</dbReference>
<dbReference type="RefSeq" id="YP_193690.1">
    <property type="nucleotide sequence ID" value="NC_006814.3"/>
</dbReference>
<dbReference type="SMR" id="Q5FKW5"/>
<dbReference type="STRING" id="272621.LBA0794"/>
<dbReference type="KEGG" id="lac:LBA0794"/>
<dbReference type="PATRIC" id="fig|272621.13.peg.756"/>
<dbReference type="eggNOG" id="COG0525">
    <property type="taxonomic scope" value="Bacteria"/>
</dbReference>
<dbReference type="HOGENOM" id="CLU_001493_0_2_9"/>
<dbReference type="OrthoDB" id="9810365at2"/>
<dbReference type="BioCyc" id="LACI272621:G1G49-809-MONOMER"/>
<dbReference type="Proteomes" id="UP000006381">
    <property type="component" value="Chromosome"/>
</dbReference>
<dbReference type="GO" id="GO:0005829">
    <property type="term" value="C:cytosol"/>
    <property type="evidence" value="ECO:0007669"/>
    <property type="project" value="TreeGrafter"/>
</dbReference>
<dbReference type="GO" id="GO:0002161">
    <property type="term" value="F:aminoacyl-tRNA deacylase activity"/>
    <property type="evidence" value="ECO:0007669"/>
    <property type="project" value="InterPro"/>
</dbReference>
<dbReference type="GO" id="GO:0005524">
    <property type="term" value="F:ATP binding"/>
    <property type="evidence" value="ECO:0007669"/>
    <property type="project" value="UniProtKB-UniRule"/>
</dbReference>
<dbReference type="GO" id="GO:0004832">
    <property type="term" value="F:valine-tRNA ligase activity"/>
    <property type="evidence" value="ECO:0007669"/>
    <property type="project" value="UniProtKB-UniRule"/>
</dbReference>
<dbReference type="GO" id="GO:0006438">
    <property type="term" value="P:valyl-tRNA aminoacylation"/>
    <property type="evidence" value="ECO:0007669"/>
    <property type="project" value="UniProtKB-UniRule"/>
</dbReference>
<dbReference type="CDD" id="cd07962">
    <property type="entry name" value="Anticodon_Ia_Val"/>
    <property type="match status" value="1"/>
</dbReference>
<dbReference type="CDD" id="cd00817">
    <property type="entry name" value="ValRS_core"/>
    <property type="match status" value="1"/>
</dbReference>
<dbReference type="FunFam" id="1.10.287.380:FF:000001">
    <property type="entry name" value="Valine--tRNA ligase"/>
    <property type="match status" value="1"/>
</dbReference>
<dbReference type="FunFam" id="1.10.730.10:FF:000014">
    <property type="entry name" value="Valine--tRNA ligase"/>
    <property type="match status" value="1"/>
</dbReference>
<dbReference type="FunFam" id="3.40.50.620:FF:000032">
    <property type="entry name" value="Valine--tRNA ligase"/>
    <property type="match status" value="1"/>
</dbReference>
<dbReference type="FunFam" id="3.40.50.620:FF:000098">
    <property type="entry name" value="Valine--tRNA ligase"/>
    <property type="match status" value="1"/>
</dbReference>
<dbReference type="FunFam" id="3.90.740.10:FF:000005">
    <property type="entry name" value="Valine--tRNA ligase, mitochondrial"/>
    <property type="match status" value="1"/>
</dbReference>
<dbReference type="Gene3D" id="3.40.50.620">
    <property type="entry name" value="HUPs"/>
    <property type="match status" value="2"/>
</dbReference>
<dbReference type="Gene3D" id="1.10.730.10">
    <property type="entry name" value="Isoleucyl-tRNA Synthetase, Domain 1"/>
    <property type="match status" value="1"/>
</dbReference>
<dbReference type="Gene3D" id="1.10.287.380">
    <property type="entry name" value="Valyl-tRNA synthetase, C-terminal domain"/>
    <property type="match status" value="1"/>
</dbReference>
<dbReference type="Gene3D" id="3.90.740.10">
    <property type="entry name" value="Valyl/Leucyl/Isoleucyl-tRNA synthetase, editing domain"/>
    <property type="match status" value="1"/>
</dbReference>
<dbReference type="HAMAP" id="MF_02004">
    <property type="entry name" value="Val_tRNA_synth_type1"/>
    <property type="match status" value="1"/>
</dbReference>
<dbReference type="InterPro" id="IPR001412">
    <property type="entry name" value="aa-tRNA-synth_I_CS"/>
</dbReference>
<dbReference type="InterPro" id="IPR002300">
    <property type="entry name" value="aa-tRNA-synth_Ia"/>
</dbReference>
<dbReference type="InterPro" id="IPR033705">
    <property type="entry name" value="Anticodon_Ia_Val"/>
</dbReference>
<dbReference type="InterPro" id="IPR013155">
    <property type="entry name" value="M/V/L/I-tRNA-synth_anticd-bd"/>
</dbReference>
<dbReference type="InterPro" id="IPR014729">
    <property type="entry name" value="Rossmann-like_a/b/a_fold"/>
</dbReference>
<dbReference type="InterPro" id="IPR010978">
    <property type="entry name" value="tRNA-bd_arm"/>
</dbReference>
<dbReference type="InterPro" id="IPR009080">
    <property type="entry name" value="tRNAsynth_Ia_anticodon-bd"/>
</dbReference>
<dbReference type="InterPro" id="IPR037118">
    <property type="entry name" value="Val-tRNA_synth_C_sf"/>
</dbReference>
<dbReference type="InterPro" id="IPR019499">
    <property type="entry name" value="Val-tRNA_synth_tRNA-bd"/>
</dbReference>
<dbReference type="InterPro" id="IPR009008">
    <property type="entry name" value="Val/Leu/Ile-tRNA-synth_edit"/>
</dbReference>
<dbReference type="InterPro" id="IPR002303">
    <property type="entry name" value="Valyl-tRNA_ligase"/>
</dbReference>
<dbReference type="NCBIfam" id="NF004349">
    <property type="entry name" value="PRK05729.1"/>
    <property type="match status" value="1"/>
</dbReference>
<dbReference type="NCBIfam" id="TIGR00422">
    <property type="entry name" value="valS"/>
    <property type="match status" value="1"/>
</dbReference>
<dbReference type="PANTHER" id="PTHR11946:SF93">
    <property type="entry name" value="VALINE--TRNA LIGASE, CHLOROPLASTIC_MITOCHONDRIAL 2"/>
    <property type="match status" value="1"/>
</dbReference>
<dbReference type="PANTHER" id="PTHR11946">
    <property type="entry name" value="VALYL-TRNA SYNTHETASES"/>
    <property type="match status" value="1"/>
</dbReference>
<dbReference type="Pfam" id="PF08264">
    <property type="entry name" value="Anticodon_1"/>
    <property type="match status" value="1"/>
</dbReference>
<dbReference type="Pfam" id="PF00133">
    <property type="entry name" value="tRNA-synt_1"/>
    <property type="match status" value="1"/>
</dbReference>
<dbReference type="Pfam" id="PF10458">
    <property type="entry name" value="Val_tRNA-synt_C"/>
    <property type="match status" value="1"/>
</dbReference>
<dbReference type="PRINTS" id="PR00986">
    <property type="entry name" value="TRNASYNTHVAL"/>
</dbReference>
<dbReference type="SUPFAM" id="SSF47323">
    <property type="entry name" value="Anticodon-binding domain of a subclass of class I aminoacyl-tRNA synthetases"/>
    <property type="match status" value="1"/>
</dbReference>
<dbReference type="SUPFAM" id="SSF52374">
    <property type="entry name" value="Nucleotidylyl transferase"/>
    <property type="match status" value="1"/>
</dbReference>
<dbReference type="SUPFAM" id="SSF46589">
    <property type="entry name" value="tRNA-binding arm"/>
    <property type="match status" value="1"/>
</dbReference>
<dbReference type="SUPFAM" id="SSF50677">
    <property type="entry name" value="ValRS/IleRS/LeuRS editing domain"/>
    <property type="match status" value="1"/>
</dbReference>
<dbReference type="PROSITE" id="PS00178">
    <property type="entry name" value="AA_TRNA_LIGASE_I"/>
    <property type="match status" value="1"/>
</dbReference>
<evidence type="ECO:0000255" key="1">
    <source>
        <dbReference type="HAMAP-Rule" id="MF_02004"/>
    </source>
</evidence>
<feature type="chain" id="PRO_0000224489" description="Valine--tRNA ligase">
    <location>
        <begin position="1"/>
        <end position="879"/>
    </location>
</feature>
<feature type="coiled-coil region" evidence="1">
    <location>
        <begin position="806"/>
        <end position="879"/>
    </location>
</feature>
<feature type="short sequence motif" description="'HIGH' region">
    <location>
        <begin position="45"/>
        <end position="55"/>
    </location>
</feature>
<feature type="short sequence motif" description="'KMSKS' region">
    <location>
        <begin position="521"/>
        <end position="525"/>
    </location>
</feature>
<feature type="binding site" evidence="1">
    <location>
        <position position="524"/>
    </location>
    <ligand>
        <name>ATP</name>
        <dbReference type="ChEBI" id="CHEBI:30616"/>
    </ligand>
</feature>
<accession>Q5FKW5</accession>
<comment type="function">
    <text evidence="1">Catalyzes the attachment of valine to tRNA(Val). As ValRS can inadvertently accommodate and process structurally similar amino acids such as threonine, to avoid such errors, it has a 'posttransfer' editing activity that hydrolyzes mischarged Thr-tRNA(Val) in a tRNA-dependent manner.</text>
</comment>
<comment type="catalytic activity">
    <reaction evidence="1">
        <text>tRNA(Val) + L-valine + ATP = L-valyl-tRNA(Val) + AMP + diphosphate</text>
        <dbReference type="Rhea" id="RHEA:10704"/>
        <dbReference type="Rhea" id="RHEA-COMP:9672"/>
        <dbReference type="Rhea" id="RHEA-COMP:9708"/>
        <dbReference type="ChEBI" id="CHEBI:30616"/>
        <dbReference type="ChEBI" id="CHEBI:33019"/>
        <dbReference type="ChEBI" id="CHEBI:57762"/>
        <dbReference type="ChEBI" id="CHEBI:78442"/>
        <dbReference type="ChEBI" id="CHEBI:78537"/>
        <dbReference type="ChEBI" id="CHEBI:456215"/>
        <dbReference type="EC" id="6.1.1.9"/>
    </reaction>
</comment>
<comment type="subunit">
    <text evidence="1">Monomer.</text>
</comment>
<comment type="subcellular location">
    <subcellularLocation>
        <location evidence="1">Cytoplasm</location>
    </subcellularLocation>
</comment>
<comment type="domain">
    <text evidence="1">ValRS has two distinct active sites: one for aminoacylation and one for editing. The misactivated threonine is translocated from the active site to the editing site.</text>
</comment>
<comment type="domain">
    <text evidence="1">The C-terminal coiled-coil domain is crucial for aminoacylation activity.</text>
</comment>
<comment type="similarity">
    <text evidence="1">Belongs to the class-I aminoacyl-tRNA synthetase family. ValS type 1 subfamily.</text>
</comment>
<keyword id="KW-0030">Aminoacyl-tRNA synthetase</keyword>
<keyword id="KW-0067">ATP-binding</keyword>
<keyword id="KW-0175">Coiled coil</keyword>
<keyword id="KW-0963">Cytoplasm</keyword>
<keyword id="KW-0436">Ligase</keyword>
<keyword id="KW-0547">Nucleotide-binding</keyword>
<keyword id="KW-0648">Protein biosynthesis</keyword>
<keyword id="KW-1185">Reference proteome</keyword>
<gene>
    <name evidence="1" type="primary">valS</name>
    <name type="ordered locus">LBA0794</name>
</gene>
<organism>
    <name type="scientific">Lactobacillus acidophilus (strain ATCC 700396 / NCK56 / N2 / NCFM)</name>
    <dbReference type="NCBI Taxonomy" id="272621"/>
    <lineage>
        <taxon>Bacteria</taxon>
        <taxon>Bacillati</taxon>
        <taxon>Bacillota</taxon>
        <taxon>Bacilli</taxon>
        <taxon>Lactobacillales</taxon>
        <taxon>Lactobacillaceae</taxon>
        <taxon>Lactobacillus</taxon>
    </lineage>
</organism>